<name>PG056_VAR67</name>
<organism>
    <name type="scientific">Variola virus (isolate Human/India/Ind3/1967)</name>
    <name type="common">VARV</name>
    <name type="synonym">Smallpox virus</name>
    <dbReference type="NCBI Taxonomy" id="587200"/>
    <lineage>
        <taxon>Viruses</taxon>
        <taxon>Varidnaviria</taxon>
        <taxon>Bamfordvirae</taxon>
        <taxon>Nucleocytoviricota</taxon>
        <taxon>Pokkesviricetes</taxon>
        <taxon>Chitovirales</taxon>
        <taxon>Poxviridae</taxon>
        <taxon>Chordopoxvirinae</taxon>
        <taxon>Orthopoxvirus</taxon>
        <taxon>Variola virus</taxon>
    </lineage>
</organism>
<dbReference type="EMBL" id="X69198">
    <property type="protein sequence ID" value="CAA48977.1"/>
    <property type="molecule type" value="Genomic_DNA"/>
</dbReference>
<dbReference type="PIR" id="G36840">
    <property type="entry name" value="G36840"/>
</dbReference>
<dbReference type="RefSeq" id="NP_042080.1">
    <property type="nucleotide sequence ID" value="NC_001611.1"/>
</dbReference>
<dbReference type="GeneID" id="1486572"/>
<dbReference type="KEGG" id="vg:1486572"/>
<dbReference type="Proteomes" id="UP000002060">
    <property type="component" value="Segment"/>
</dbReference>
<dbReference type="GO" id="GO:0043657">
    <property type="term" value="C:host cell"/>
    <property type="evidence" value="ECO:0007669"/>
    <property type="project" value="GOC"/>
</dbReference>
<dbReference type="GO" id="GO:0044174">
    <property type="term" value="C:host cell endosome"/>
    <property type="evidence" value="ECO:0007669"/>
    <property type="project" value="UniProtKB-SubCell"/>
</dbReference>
<dbReference type="GO" id="GO:0016020">
    <property type="term" value="C:membrane"/>
    <property type="evidence" value="ECO:0007669"/>
    <property type="project" value="UniProtKB-KW"/>
</dbReference>
<dbReference type="GO" id="GO:0055036">
    <property type="term" value="C:virion membrane"/>
    <property type="evidence" value="ECO:0007669"/>
    <property type="project" value="UniProtKB-SubCell"/>
</dbReference>
<dbReference type="GO" id="GO:0039701">
    <property type="term" value="P:microtubule-dependent intracellular transport of viral material towards cell periphery"/>
    <property type="evidence" value="ECO:0007669"/>
    <property type="project" value="UniProtKB-KW"/>
</dbReference>
<dbReference type="InterPro" id="IPR005005">
    <property type="entry name" value="Poxvirus_F12L"/>
</dbReference>
<dbReference type="InterPro" id="IPR012337">
    <property type="entry name" value="RNaseH-like_sf"/>
</dbReference>
<dbReference type="Pfam" id="PF03337">
    <property type="entry name" value="Pox_F12L"/>
    <property type="match status" value="1"/>
</dbReference>
<dbReference type="PIRSF" id="PIRSF015793">
    <property type="entry name" value="VAC_EEV"/>
    <property type="match status" value="1"/>
</dbReference>
<dbReference type="SUPFAM" id="SSF53098">
    <property type="entry name" value="Ribonuclease H-like"/>
    <property type="match status" value="1"/>
</dbReference>
<feature type="chain" id="PRO_0000099504" description="Protein OPG056">
    <location>
        <begin position="1"/>
        <end position="635"/>
    </location>
</feature>
<organismHost>
    <name type="scientific">Homo sapiens</name>
    <name type="common">Human</name>
    <dbReference type="NCBI Taxonomy" id="9606"/>
</organismHost>
<gene>
    <name type="primary">OPG056</name>
    <name type="ORF">C16L</name>
    <name type="ORF">F12L</name>
</gene>
<reference key="1">
    <citation type="journal article" date="1993" name="Virus Res.">
        <title>Analysis of the nucleotide sequence of a 43 kbp segment of the genome of variola virus India-1967 strain.</title>
        <authorList>
            <person name="Shchelkunov S.N."/>
            <person name="Blinov V.M."/>
            <person name="Resenchuk S.M."/>
            <person name="Totmenin A.V."/>
            <person name="Sandakhchiev L.S."/>
        </authorList>
    </citation>
    <scope>NUCLEOTIDE SEQUENCE [GENOMIC DNA]</scope>
    <source>
        <strain>India-1967 / Isolate Ind3</strain>
    </source>
</reference>
<reference key="2">
    <citation type="journal article" date="1993" name="FEBS Lett.">
        <title>Genes of variola and vaccinia viruses necessary to overcome the host protective mechanisms.</title>
        <authorList>
            <person name="Shchelkunov S.N."/>
            <person name="Blinov V.M."/>
            <person name="Sandakhchiev L.S."/>
        </authorList>
    </citation>
    <scope>NUCLEOTIDE SEQUENCE [GENOMIC DNA]</scope>
    <source>
        <strain>India-1967 / Isolate Ind3</strain>
    </source>
</reference>
<evidence type="ECO:0000250" key="1">
    <source>
        <dbReference type="UniProtKB" id="Q80HX6"/>
    </source>
</evidence>
<evidence type="ECO:0000305" key="2"/>
<keyword id="KW-0244">Early protein</keyword>
<keyword id="KW-1039">Host endosome</keyword>
<keyword id="KW-0945">Host-virus interaction</keyword>
<keyword id="KW-0426">Late protein</keyword>
<keyword id="KW-0472">Membrane</keyword>
<keyword id="KW-1189">Microtubular outwards viral transport</keyword>
<keyword id="KW-1185">Reference proteome</keyword>
<keyword id="KW-1188">Viral release from host cell</keyword>
<keyword id="KW-0946">Virion</keyword>
<keyword id="KW-0843">Virulence</keyword>
<comment type="function">
    <text evidence="1">Plays a role in intracellular enveloped virus (IEV) transport to the cell surface through microtubule transport. Together with protein OPG064, forms a complex that interacts with host KLC2 (kinesin light chain isoform 2) to engage the kinesin-1 complex and thereby promote IEV trafficking.</text>
</comment>
<comment type="subunit">
    <text evidence="1">Interacts with protein OPG164. Interacts with protein OPG064.</text>
</comment>
<comment type="subcellular location">
    <subcellularLocation>
        <location evidence="1">Virion membrane</location>
    </subcellularLocation>
    <subcellularLocation>
        <location evidence="1">Host endosome</location>
    </subcellularLocation>
    <text evidence="1">Associates with the membrane of IEV particles, but not intracellular mature virus (IMV), cell-associated enveloped virus (CEV) or EEV. Colocalizes with microtubules.</text>
</comment>
<comment type="induction">
    <text evidence="1">Expressed in the early phase of the viral replicative cycle.</text>
</comment>
<comment type="similarity">
    <text evidence="2">Belongs to the orthopoxvirus OPG056 family.</text>
</comment>
<protein>
    <recommendedName>
        <fullName>Protein OPG056</fullName>
    </recommendedName>
    <alternativeName>
        <fullName>Protein F12</fullName>
    </alternativeName>
</protein>
<proteinExistence type="inferred from homology"/>
<accession>P33871</accession>
<sequence>MLNRVQILMKTANNYETIEILRNYLRLYIILARNEEGHGILIYDDNIDSIMSMMNITRLEVIGLTTHCTKLRSSPPIPMSRLFMDEIDHESYYSPKTSDYPLIDIIRKRSHEQGDIALALKRYCIENTDSISEINEWLSSKGLACYRFVKFNDYRKQMYRKFSKCTIVDSMIIGHIGHHYIWIKNLETYTRPEIDVLPFDIKYISRDELWAQISSSLDQTHIKTITVSVYGAITDNGPMPYMISTYPGNTFVNFNSVKDLILNFLDWIKDIMTSTRTIILVGYMSNLFDIPLLTVYWPNNCGWKIYNNILISSDGARVIWMDAYKFSCGLSLQDYCYHWGSKPESRPFDLIKKIDAKRNIKSWVKESMTSLKSLYEAFETQSGALEVLMSPCRMFSFSRIEDMFLTSVINRVSKNTGMGMYYPTNDISSLFIESSICLDYIIVNNQKSNKYRIKSVLDIISSKQYPAGRPNYVKNGTKGKLYIALCKVTVPTNDHIPVVYHDDDNTTTFITVLTSVDIETATRAGYSIVELGALQWDDNIPELKDCLLDSIKMIYDLNTVTTNNLLEQLIENINFNNSSIILLFYTFAISYCRAFIYSIMETIDPVYISQFSYKELYIRSSYKDINEVMSQMVKL</sequence>